<comment type="function">
    <text evidence="2">Component of the ubiquinol-cytochrome c reductase complex (complex III or cytochrome b-c1 complex) that is part of the mitochondrial respiratory chain. The b-c1 complex mediates electron transfer from ubiquinol to cytochrome c. Contributes to the generation of a proton gradient across the mitochondrial membrane that is then used for ATP synthesis.</text>
</comment>
<comment type="cofactor">
    <cofactor evidence="2">
        <name>heme b</name>
        <dbReference type="ChEBI" id="CHEBI:60344"/>
    </cofactor>
    <text evidence="2">Binds 2 heme b groups non-covalently.</text>
</comment>
<comment type="subunit">
    <text evidence="2">The cytochrome bc1 complex contains 11 subunits: 3 respiratory subunits (MT-CYB, CYC1 and UQCRFS1), 2 core proteins (UQCRC1 and UQCRC2) and 6 low-molecular weight proteins (UQCRH/QCR6, UQCRB/QCR7, UQCRQ/QCR8, UQCR10/QCR9, UQCR11/QCR10 and a cleavage product of UQCRFS1). This cytochrome bc1 complex then forms a dimer.</text>
</comment>
<comment type="subcellular location">
    <subcellularLocation>
        <location evidence="2">Mitochondrion inner membrane</location>
        <topology evidence="2">Multi-pass membrane protein</topology>
    </subcellularLocation>
</comment>
<comment type="miscellaneous">
    <text evidence="1">Heme 1 (or BL or b562) is low-potential and absorbs at about 562 nm, and heme 2 (or BH or b566) is high-potential and absorbs at about 566 nm.</text>
</comment>
<comment type="similarity">
    <text evidence="3 4">Belongs to the cytochrome b family.</text>
</comment>
<comment type="caution">
    <text evidence="2">The full-length protein contains only eight transmembrane helices, not nine as predicted by bioinformatics tools.</text>
</comment>
<accession>O79211</accession>
<organism>
    <name type="scientific">Oceanodroma melania</name>
    <name type="common">Black storm-petrel</name>
    <name type="synonym">Hydrobates melania</name>
    <dbReference type="NCBI Taxonomy" id="79632"/>
    <lineage>
        <taxon>Eukaryota</taxon>
        <taxon>Metazoa</taxon>
        <taxon>Chordata</taxon>
        <taxon>Craniata</taxon>
        <taxon>Vertebrata</taxon>
        <taxon>Euteleostomi</taxon>
        <taxon>Archelosauria</taxon>
        <taxon>Archosauria</taxon>
        <taxon>Dinosauria</taxon>
        <taxon>Saurischia</taxon>
        <taxon>Theropoda</taxon>
        <taxon>Coelurosauria</taxon>
        <taxon>Aves</taxon>
        <taxon>Neognathae</taxon>
        <taxon>Neoaves</taxon>
        <taxon>Aequornithes</taxon>
        <taxon>Procellariiformes</taxon>
        <taxon>Hydrobatidae</taxon>
        <taxon>Oceanodroma</taxon>
    </lineage>
</organism>
<geneLocation type="mitochondrion"/>
<sequence>MAPNPRKSHPLLKMINNSLIDLPAPSNISAWWNFGSLLALCLATQILTGLLLAMHYTADTTLAFSSVAHTCRDVQYGWLIRNMHANGASFFFICVYLHIGRGFYYGSYLHKETWNTGVLLLLTLMATAFVGYVLPWGQMSFWGATVITNMFSAIPYIGQTIVEWAWGGFSVDNPTLTRFFALHFLLPFLIAGLTLIHLTFLHESGSNNPLGIISNCDKIPFHPYYSLKDILGLMLLLLPLTTLALFSPNLLGDPENFTPANPLVTPPHIKPEWYFLFAYAILRSIPNKLGGVLALAASVLVLFLSPLLHKSKQRTMAFRPLSQLLFWTLVANLLILTWIGSQPLEHPFIIIGQLASTTYFTILLVLFPITSALENKMLNF</sequence>
<gene>
    <name type="primary">MT-CYB</name>
    <name type="synonym">COB</name>
    <name type="synonym">CYTB</name>
    <name type="synonym">MTCYB</name>
</gene>
<reference key="1">
    <citation type="journal article" date="1998" name="Mol. Biol. Evol.">
        <title>Body size effects and rates of cytochrome-b evolution in tube-nosed seabirds.</title>
        <authorList>
            <person name="Nunn G.B."/>
            <person name="Stanley S.E."/>
        </authorList>
    </citation>
    <scope>NUCLEOTIDE SEQUENCE [GENOMIC DNA]</scope>
    <source>
        <strain>Isolate Omela-1</strain>
    </source>
</reference>
<name>CYB_OCEME</name>
<proteinExistence type="inferred from homology"/>
<feature type="chain" id="PRO_0000061292" description="Cytochrome b">
    <location>
        <begin position="1"/>
        <end position="380"/>
    </location>
</feature>
<feature type="transmembrane region" description="Helical" evidence="2">
    <location>
        <begin position="34"/>
        <end position="54"/>
    </location>
</feature>
<feature type="transmembrane region" description="Helical" evidence="2">
    <location>
        <begin position="78"/>
        <end position="99"/>
    </location>
</feature>
<feature type="transmembrane region" description="Helical" evidence="2">
    <location>
        <begin position="114"/>
        <end position="134"/>
    </location>
</feature>
<feature type="transmembrane region" description="Helical" evidence="2">
    <location>
        <begin position="179"/>
        <end position="199"/>
    </location>
</feature>
<feature type="transmembrane region" description="Helical" evidence="2">
    <location>
        <begin position="227"/>
        <end position="247"/>
    </location>
</feature>
<feature type="transmembrane region" description="Helical" evidence="2">
    <location>
        <begin position="289"/>
        <end position="309"/>
    </location>
</feature>
<feature type="transmembrane region" description="Helical" evidence="2">
    <location>
        <begin position="321"/>
        <end position="341"/>
    </location>
</feature>
<feature type="transmembrane region" description="Helical" evidence="2">
    <location>
        <begin position="348"/>
        <end position="368"/>
    </location>
</feature>
<feature type="binding site" description="axial binding residue" evidence="2">
    <location>
        <position position="84"/>
    </location>
    <ligand>
        <name>heme b</name>
        <dbReference type="ChEBI" id="CHEBI:60344"/>
        <label>b562</label>
    </ligand>
    <ligandPart>
        <name>Fe</name>
        <dbReference type="ChEBI" id="CHEBI:18248"/>
    </ligandPart>
</feature>
<feature type="binding site" description="axial binding residue" evidence="2">
    <location>
        <position position="98"/>
    </location>
    <ligand>
        <name>heme b</name>
        <dbReference type="ChEBI" id="CHEBI:60344"/>
        <label>b566</label>
    </ligand>
    <ligandPart>
        <name>Fe</name>
        <dbReference type="ChEBI" id="CHEBI:18248"/>
    </ligandPart>
</feature>
<feature type="binding site" description="axial binding residue" evidence="2">
    <location>
        <position position="183"/>
    </location>
    <ligand>
        <name>heme b</name>
        <dbReference type="ChEBI" id="CHEBI:60344"/>
        <label>b562</label>
    </ligand>
    <ligandPart>
        <name>Fe</name>
        <dbReference type="ChEBI" id="CHEBI:18248"/>
    </ligandPart>
</feature>
<feature type="binding site" description="axial binding residue" evidence="2">
    <location>
        <position position="197"/>
    </location>
    <ligand>
        <name>heme b</name>
        <dbReference type="ChEBI" id="CHEBI:60344"/>
        <label>b566</label>
    </ligand>
    <ligandPart>
        <name>Fe</name>
        <dbReference type="ChEBI" id="CHEBI:18248"/>
    </ligandPart>
</feature>
<feature type="binding site" evidence="2">
    <location>
        <position position="202"/>
    </location>
    <ligand>
        <name>a ubiquinone</name>
        <dbReference type="ChEBI" id="CHEBI:16389"/>
    </ligand>
</feature>
<dbReference type="EMBL" id="AF076065">
    <property type="protein sequence ID" value="AAC68622.1"/>
    <property type="molecule type" value="Genomic_DNA"/>
</dbReference>
<dbReference type="SMR" id="O79211"/>
<dbReference type="GO" id="GO:0005743">
    <property type="term" value="C:mitochondrial inner membrane"/>
    <property type="evidence" value="ECO:0007669"/>
    <property type="project" value="UniProtKB-SubCell"/>
</dbReference>
<dbReference type="GO" id="GO:0045275">
    <property type="term" value="C:respiratory chain complex III"/>
    <property type="evidence" value="ECO:0007669"/>
    <property type="project" value="InterPro"/>
</dbReference>
<dbReference type="GO" id="GO:0046872">
    <property type="term" value="F:metal ion binding"/>
    <property type="evidence" value="ECO:0007669"/>
    <property type="project" value="UniProtKB-KW"/>
</dbReference>
<dbReference type="GO" id="GO:0008121">
    <property type="term" value="F:ubiquinol-cytochrome-c reductase activity"/>
    <property type="evidence" value="ECO:0007669"/>
    <property type="project" value="InterPro"/>
</dbReference>
<dbReference type="GO" id="GO:0006122">
    <property type="term" value="P:mitochondrial electron transport, ubiquinol to cytochrome c"/>
    <property type="evidence" value="ECO:0007669"/>
    <property type="project" value="TreeGrafter"/>
</dbReference>
<dbReference type="CDD" id="cd00290">
    <property type="entry name" value="cytochrome_b_C"/>
    <property type="match status" value="1"/>
</dbReference>
<dbReference type="CDD" id="cd00284">
    <property type="entry name" value="Cytochrome_b_N"/>
    <property type="match status" value="1"/>
</dbReference>
<dbReference type="FunFam" id="1.20.810.10:FF:000002">
    <property type="entry name" value="Cytochrome b"/>
    <property type="match status" value="1"/>
</dbReference>
<dbReference type="Gene3D" id="1.20.810.10">
    <property type="entry name" value="Cytochrome Bc1 Complex, Chain C"/>
    <property type="match status" value="1"/>
</dbReference>
<dbReference type="InterPro" id="IPR005798">
    <property type="entry name" value="Cyt_b/b6_C"/>
</dbReference>
<dbReference type="InterPro" id="IPR036150">
    <property type="entry name" value="Cyt_b/b6_C_sf"/>
</dbReference>
<dbReference type="InterPro" id="IPR005797">
    <property type="entry name" value="Cyt_b/b6_N"/>
</dbReference>
<dbReference type="InterPro" id="IPR027387">
    <property type="entry name" value="Cytb/b6-like_sf"/>
</dbReference>
<dbReference type="InterPro" id="IPR030689">
    <property type="entry name" value="Cytochrome_b"/>
</dbReference>
<dbReference type="InterPro" id="IPR048260">
    <property type="entry name" value="Cytochrome_b_C_euk/bac"/>
</dbReference>
<dbReference type="InterPro" id="IPR048259">
    <property type="entry name" value="Cytochrome_b_N_euk/bac"/>
</dbReference>
<dbReference type="InterPro" id="IPR016174">
    <property type="entry name" value="Di-haem_cyt_TM"/>
</dbReference>
<dbReference type="PANTHER" id="PTHR19271">
    <property type="entry name" value="CYTOCHROME B"/>
    <property type="match status" value="1"/>
</dbReference>
<dbReference type="PANTHER" id="PTHR19271:SF16">
    <property type="entry name" value="CYTOCHROME B"/>
    <property type="match status" value="1"/>
</dbReference>
<dbReference type="Pfam" id="PF00032">
    <property type="entry name" value="Cytochrom_B_C"/>
    <property type="match status" value="1"/>
</dbReference>
<dbReference type="Pfam" id="PF00033">
    <property type="entry name" value="Cytochrome_B"/>
    <property type="match status" value="1"/>
</dbReference>
<dbReference type="PIRSF" id="PIRSF038885">
    <property type="entry name" value="COB"/>
    <property type="match status" value="1"/>
</dbReference>
<dbReference type="SUPFAM" id="SSF81648">
    <property type="entry name" value="a domain/subunit of cytochrome bc1 complex (Ubiquinol-cytochrome c reductase)"/>
    <property type="match status" value="1"/>
</dbReference>
<dbReference type="SUPFAM" id="SSF81342">
    <property type="entry name" value="Transmembrane di-heme cytochromes"/>
    <property type="match status" value="1"/>
</dbReference>
<dbReference type="PROSITE" id="PS51003">
    <property type="entry name" value="CYTB_CTER"/>
    <property type="match status" value="1"/>
</dbReference>
<dbReference type="PROSITE" id="PS51002">
    <property type="entry name" value="CYTB_NTER"/>
    <property type="match status" value="1"/>
</dbReference>
<evidence type="ECO:0000250" key="1"/>
<evidence type="ECO:0000250" key="2">
    <source>
        <dbReference type="UniProtKB" id="P00157"/>
    </source>
</evidence>
<evidence type="ECO:0000255" key="3">
    <source>
        <dbReference type="PROSITE-ProRule" id="PRU00967"/>
    </source>
</evidence>
<evidence type="ECO:0000255" key="4">
    <source>
        <dbReference type="PROSITE-ProRule" id="PRU00968"/>
    </source>
</evidence>
<protein>
    <recommendedName>
        <fullName>Cytochrome b</fullName>
    </recommendedName>
    <alternativeName>
        <fullName>Complex III subunit 3</fullName>
    </alternativeName>
    <alternativeName>
        <fullName>Complex III subunit III</fullName>
    </alternativeName>
    <alternativeName>
        <fullName>Cytochrome b-c1 complex subunit 3</fullName>
    </alternativeName>
    <alternativeName>
        <fullName>Ubiquinol-cytochrome-c reductase complex cytochrome b subunit</fullName>
    </alternativeName>
</protein>
<keyword id="KW-0249">Electron transport</keyword>
<keyword id="KW-0349">Heme</keyword>
<keyword id="KW-0408">Iron</keyword>
<keyword id="KW-0472">Membrane</keyword>
<keyword id="KW-0479">Metal-binding</keyword>
<keyword id="KW-0496">Mitochondrion</keyword>
<keyword id="KW-0999">Mitochondrion inner membrane</keyword>
<keyword id="KW-0679">Respiratory chain</keyword>
<keyword id="KW-0812">Transmembrane</keyword>
<keyword id="KW-1133">Transmembrane helix</keyword>
<keyword id="KW-0813">Transport</keyword>
<keyword id="KW-0830">Ubiquinone</keyword>